<comment type="function">
    <text evidence="6 7">Snake venom zinc metalloprotease that possesses high hemorrhagic activity. It inhibits collagen-induced platelet aggregation and activates prothrombin (F2).</text>
</comment>
<comment type="cofactor">
    <cofactor evidence="1">
        <name>Zn(2+)</name>
        <dbReference type="ChEBI" id="CHEBI:29105"/>
    </cofactor>
    <text evidence="1">Binds 1 zinc ion per subunit.</text>
</comment>
<comment type="subunit">
    <text evidence="1">Monomer.</text>
</comment>
<comment type="subcellular location">
    <subcellularLocation>
        <location evidence="6">Secreted</location>
    </subcellularLocation>
</comment>
<comment type="tissue specificity">
    <text evidence="8">Expressed by the venom gland.</text>
</comment>
<comment type="similarity">
    <text evidence="8">Belongs to the venom metalloproteinase (M12B) family. P-III subfamily. P-IIIa sub-subfamily.</text>
</comment>
<comment type="caution">
    <text evidence="9">May be linked to snaclec alpha and beta subunits, thus forming a metalloproteinase from the P-IIId sub-subfamily.</text>
</comment>
<feature type="signal peptide" evidence="2">
    <location>
        <begin position="1"/>
        <end position="20"/>
    </location>
</feature>
<feature type="propeptide" id="PRO_0000367911" evidence="1">
    <location>
        <begin position="21"/>
        <end position="194"/>
    </location>
</feature>
<feature type="chain" id="PRO_0000367912" description="Zinc metalloproteinase-disintegrin-like EoVMP2">
    <location>
        <begin position="195"/>
        <end position="613"/>
    </location>
</feature>
<feature type="domain" description="Peptidase M12B" evidence="4">
    <location>
        <begin position="201"/>
        <end position="397"/>
    </location>
</feature>
<feature type="domain" description="Disintegrin" evidence="3">
    <location>
        <begin position="405"/>
        <end position="491"/>
    </location>
</feature>
<feature type="short sequence motif" description="D/ECD-tripeptide">
    <location>
        <begin position="469"/>
        <end position="471"/>
    </location>
</feature>
<feature type="active site" evidence="4 5">
    <location>
        <position position="338"/>
    </location>
</feature>
<feature type="binding site" evidence="1">
    <location>
        <position position="204"/>
    </location>
    <ligand>
        <name>Ca(2+)</name>
        <dbReference type="ChEBI" id="CHEBI:29108"/>
        <label>1</label>
    </ligand>
</feature>
<feature type="binding site" evidence="1">
    <location>
        <position position="288"/>
    </location>
    <ligand>
        <name>Ca(2+)</name>
        <dbReference type="ChEBI" id="CHEBI:29108"/>
        <label>1</label>
    </ligand>
</feature>
<feature type="binding site" evidence="1">
    <location>
        <position position="337"/>
    </location>
    <ligand>
        <name>Zn(2+)</name>
        <dbReference type="ChEBI" id="CHEBI:29105"/>
        <note>catalytic</note>
    </ligand>
</feature>
<feature type="binding site" evidence="1">
    <location>
        <position position="341"/>
    </location>
    <ligand>
        <name>Zn(2+)</name>
        <dbReference type="ChEBI" id="CHEBI:29105"/>
        <note>catalytic</note>
    </ligand>
</feature>
<feature type="binding site" evidence="1">
    <location>
        <position position="347"/>
    </location>
    <ligand>
        <name>Zn(2+)</name>
        <dbReference type="ChEBI" id="CHEBI:29105"/>
        <note>catalytic</note>
    </ligand>
</feature>
<feature type="binding site" evidence="1">
    <location>
        <position position="392"/>
    </location>
    <ligand>
        <name>Ca(2+)</name>
        <dbReference type="ChEBI" id="CHEBI:29108"/>
        <label>1</label>
    </ligand>
</feature>
<feature type="binding site" evidence="1">
    <location>
        <position position="395"/>
    </location>
    <ligand>
        <name>Ca(2+)</name>
        <dbReference type="ChEBI" id="CHEBI:29108"/>
        <label>1</label>
    </ligand>
</feature>
<feature type="binding site" evidence="1">
    <location>
        <position position="407"/>
    </location>
    <ligand>
        <name>Ca(2+)</name>
        <dbReference type="ChEBI" id="CHEBI:29108"/>
        <label>2</label>
    </ligand>
</feature>
<feature type="binding site" evidence="1">
    <location>
        <position position="410"/>
    </location>
    <ligand>
        <name>Ca(2+)</name>
        <dbReference type="ChEBI" id="CHEBI:29108"/>
        <label>2</label>
    </ligand>
</feature>
<feature type="binding site" evidence="1">
    <location>
        <position position="412"/>
    </location>
    <ligand>
        <name>Ca(2+)</name>
        <dbReference type="ChEBI" id="CHEBI:29108"/>
        <label>2</label>
    </ligand>
</feature>
<feature type="binding site" evidence="1">
    <location>
        <position position="414"/>
    </location>
    <ligand>
        <name>Ca(2+)</name>
        <dbReference type="ChEBI" id="CHEBI:29108"/>
        <label>2</label>
    </ligand>
</feature>
<feature type="binding site" evidence="1">
    <location>
        <position position="417"/>
    </location>
    <ligand>
        <name>Ca(2+)</name>
        <dbReference type="ChEBI" id="CHEBI:29108"/>
        <label>2</label>
    </ligand>
</feature>
<feature type="binding site" evidence="1">
    <location>
        <position position="420"/>
    </location>
    <ligand>
        <name>Ca(2+)</name>
        <dbReference type="ChEBI" id="CHEBI:29108"/>
        <label>2</label>
    </ligand>
</feature>
<feature type="modified residue" description="Pyrrolidone carboxylic acid" evidence="1">
    <location>
        <position position="195"/>
    </location>
</feature>
<feature type="glycosylation site" description="N-linked (GlcNAc...) asparagine" evidence="2">
    <location>
        <position position="219"/>
    </location>
</feature>
<feature type="glycosylation site" description="N-linked (GlcNAc...) asparagine" evidence="2">
    <location>
        <position position="375"/>
    </location>
</feature>
<feature type="disulfide bond" evidence="1">
    <location>
        <begin position="312"/>
        <end position="392"/>
    </location>
</feature>
<feature type="disulfide bond" evidence="1">
    <location>
        <begin position="352"/>
        <end position="376"/>
    </location>
</feature>
<feature type="disulfide bond" evidence="1">
    <location>
        <begin position="354"/>
        <end position="359"/>
    </location>
</feature>
<feature type="disulfide bond" evidence="1">
    <location>
        <begin position="408"/>
        <end position="437"/>
    </location>
</feature>
<feature type="disulfide bond" evidence="1">
    <location>
        <begin position="419"/>
        <end position="432"/>
    </location>
</feature>
<feature type="disulfide bond" evidence="1">
    <location>
        <begin position="421"/>
        <end position="427"/>
    </location>
</feature>
<feature type="disulfide bond" evidence="1">
    <location>
        <begin position="431"/>
        <end position="454"/>
    </location>
</feature>
<feature type="disulfide bond" evidence="1">
    <location>
        <begin position="445"/>
        <end position="451"/>
    </location>
</feature>
<feature type="disulfide bond" evidence="1">
    <location>
        <begin position="450"/>
        <end position="476"/>
    </location>
</feature>
<feature type="disulfide bond" evidence="1">
    <location>
        <begin position="463"/>
        <end position="483"/>
    </location>
</feature>
<feature type="disulfide bond" evidence="1">
    <location>
        <begin position="470"/>
        <end position="502"/>
    </location>
</feature>
<feature type="disulfide bond" evidence="1">
    <location>
        <begin position="495"/>
        <end position="507"/>
    </location>
</feature>
<feature type="disulfide bond" evidence="1">
    <location>
        <begin position="514"/>
        <end position="564"/>
    </location>
</feature>
<feature type="disulfide bond" evidence="1">
    <location>
        <begin position="529"/>
        <end position="575"/>
    </location>
</feature>
<feature type="disulfide bond" evidence="1">
    <location>
        <begin position="542"/>
        <end position="552"/>
    </location>
</feature>
<feature type="disulfide bond" evidence="1">
    <location>
        <begin position="559"/>
        <end position="601"/>
    </location>
</feature>
<feature type="disulfide bond" evidence="1">
    <location>
        <begin position="595"/>
        <end position="606"/>
    </location>
</feature>
<protein>
    <recommendedName>
        <fullName>Zinc metalloproteinase-disintegrin-like EoVMP2</fullName>
        <ecNumber>3.4.24.-</ecNumber>
    </recommendedName>
    <alternativeName>
        <fullName>Haemorrhagic 56 kDa metalloproteinase</fullName>
    </alternativeName>
    <alternativeName>
        <fullName>Snake venom metalloproteinase</fullName>
        <shortName>SVMP</shortName>
    </alternativeName>
    <alternativeName>
        <fullName>Zinc metalloproteinase-disintegrin-like Eoc22</fullName>
    </alternativeName>
</protein>
<accession>Q2UXQ5</accession>
<keyword id="KW-1204">Blood coagulation cascade activating toxin</keyword>
<keyword id="KW-0106">Calcium</keyword>
<keyword id="KW-1217">Cell adhesion impairing toxin</keyword>
<keyword id="KW-0903">Direct protein sequencing</keyword>
<keyword id="KW-1015">Disulfide bond</keyword>
<keyword id="KW-0325">Glycoprotein</keyword>
<keyword id="KW-1200">Hemorrhagic toxin</keyword>
<keyword id="KW-1199">Hemostasis impairing toxin</keyword>
<keyword id="KW-0378">Hydrolase</keyword>
<keyword id="KW-0479">Metal-binding</keyword>
<keyword id="KW-0482">Metalloprotease</keyword>
<keyword id="KW-1201">Platelet aggregation inhibiting toxin</keyword>
<keyword id="KW-0645">Protease</keyword>
<keyword id="KW-0655">Prothrombin activator</keyword>
<keyword id="KW-0873">Pyrrolidone carboxylic acid</keyword>
<keyword id="KW-0964">Secreted</keyword>
<keyword id="KW-0732">Signal</keyword>
<keyword id="KW-0800">Toxin</keyword>
<keyword id="KW-0862">Zinc</keyword>
<keyword id="KW-0865">Zymogen</keyword>
<evidence type="ECO:0000250" key="1"/>
<evidence type="ECO:0000255" key="2"/>
<evidence type="ECO:0000255" key="3">
    <source>
        <dbReference type="PROSITE-ProRule" id="PRU00068"/>
    </source>
</evidence>
<evidence type="ECO:0000255" key="4">
    <source>
        <dbReference type="PROSITE-ProRule" id="PRU00276"/>
    </source>
</evidence>
<evidence type="ECO:0000255" key="5">
    <source>
        <dbReference type="PROSITE-ProRule" id="PRU10095"/>
    </source>
</evidence>
<evidence type="ECO:0000269" key="6">
    <source>
    </source>
</evidence>
<evidence type="ECO:0000269" key="7">
    <source>
    </source>
</evidence>
<evidence type="ECO:0000305" key="8"/>
<evidence type="ECO:0000305" key="9">
    <source>
    </source>
</evidence>
<name>VM3E2_ECHOC</name>
<organism>
    <name type="scientific">Echis ocellatus</name>
    <name type="common">Ocellated saw-scaled viper</name>
    <dbReference type="NCBI Taxonomy" id="99586"/>
    <lineage>
        <taxon>Eukaryota</taxon>
        <taxon>Metazoa</taxon>
        <taxon>Chordata</taxon>
        <taxon>Craniata</taxon>
        <taxon>Vertebrata</taxon>
        <taxon>Euteleostomi</taxon>
        <taxon>Lepidosauria</taxon>
        <taxon>Squamata</taxon>
        <taxon>Bifurcata</taxon>
        <taxon>Unidentata</taxon>
        <taxon>Episquamata</taxon>
        <taxon>Toxicofera</taxon>
        <taxon>Serpentes</taxon>
        <taxon>Colubroidea</taxon>
        <taxon>Viperidae</taxon>
        <taxon>Viperinae</taxon>
        <taxon>Echis</taxon>
    </lineage>
</organism>
<reference key="1">
    <citation type="journal article" date="2006" name="PLoS Med.">
        <title>Bioinformatics and multiepitope DNA immunization to design rational snake antivenom.</title>
        <authorList>
            <person name="Wagstaff S.C."/>
            <person name="Laing G.D."/>
            <person name="Theakston R.D.G."/>
            <person name="Papaspyridis C."/>
            <person name="Harrison R.A."/>
        </authorList>
    </citation>
    <scope>NUCLEOTIDE SEQUENCE [MRNA]</scope>
    <source>
        <tissue>Venom gland</tissue>
    </source>
</reference>
<reference key="2">
    <citation type="journal article" date="2003" name="Toxicon">
        <title>The purification and partial characterisation of two novel metalloproteinases from the venom of the West African carpet viper, Echis ocellatus.</title>
        <authorList>
            <person name="Howes J.-M."/>
            <person name="Wilkinson M.C."/>
            <person name="Theakston R.D.G."/>
            <person name="Laing G.D."/>
        </authorList>
    </citation>
    <scope>PROTEIN SEQUENCE OF 268-277</scope>
    <scope>FUNCTION</scope>
    <scope>SUBCELLULAR LOCATION</scope>
    <source>
        <tissue>Venom</tissue>
    </source>
</reference>
<reference key="3">
    <citation type="journal article" date="2005" name="Biochim. Biophys. Acta">
        <title>Effects of three novel metalloproteinases from the venom of the West African saw-scaled viper, Echis ocellatus on blood coagulation and platelets.</title>
        <authorList>
            <person name="Howes J.-M."/>
            <person name="Kamiguti A.S."/>
            <person name="Theakston R.D.G."/>
            <person name="Wilkinson M.C."/>
            <person name="Laing G.D."/>
        </authorList>
    </citation>
    <scope>FUNCTION</scope>
    <source>
        <tissue>Venom</tissue>
    </source>
</reference>
<reference key="4">
    <citation type="journal article" date="2009" name="J. Proteomics">
        <title>Combined snake venomics and venom gland transcriptomic analysis of the ocellated carpet viper, Echis ocellatus.</title>
        <authorList>
            <person name="Wagstaff S.C."/>
            <person name="Sanz L."/>
            <person name="Juarez P."/>
            <person name="Harrison R.A."/>
            <person name="Calvete J.J."/>
        </authorList>
    </citation>
    <scope>POSSIBLE SUBUNIT</scope>
    <scope>IDENTIFICATION BY MASS SPECTROMETRY</scope>
    <source>
        <tissue>Venom</tissue>
    </source>
</reference>
<proteinExistence type="evidence at protein level"/>
<dbReference type="EC" id="3.4.24.-"/>
<dbReference type="EMBL" id="AM039696">
    <property type="protein sequence ID" value="CAJ01684.1"/>
    <property type="molecule type" value="mRNA"/>
</dbReference>
<dbReference type="SMR" id="Q2UXQ5"/>
<dbReference type="MEROPS" id="M12.133"/>
<dbReference type="GlyCosmos" id="Q2UXQ5">
    <property type="glycosylation" value="2 sites, No reported glycans"/>
</dbReference>
<dbReference type="GO" id="GO:0005576">
    <property type="term" value="C:extracellular region"/>
    <property type="evidence" value="ECO:0007669"/>
    <property type="project" value="UniProtKB-SubCell"/>
</dbReference>
<dbReference type="GO" id="GO:0005886">
    <property type="term" value="C:plasma membrane"/>
    <property type="evidence" value="ECO:0007669"/>
    <property type="project" value="TreeGrafter"/>
</dbReference>
<dbReference type="GO" id="GO:0046872">
    <property type="term" value="F:metal ion binding"/>
    <property type="evidence" value="ECO:0007669"/>
    <property type="project" value="UniProtKB-KW"/>
</dbReference>
<dbReference type="GO" id="GO:0004222">
    <property type="term" value="F:metalloendopeptidase activity"/>
    <property type="evidence" value="ECO:0007669"/>
    <property type="project" value="InterPro"/>
</dbReference>
<dbReference type="GO" id="GO:0016504">
    <property type="term" value="F:peptidase activator activity"/>
    <property type="evidence" value="ECO:0007669"/>
    <property type="project" value="UniProtKB-KW"/>
</dbReference>
<dbReference type="GO" id="GO:0090729">
    <property type="term" value="F:toxin activity"/>
    <property type="evidence" value="ECO:0007669"/>
    <property type="project" value="UniProtKB-KW"/>
</dbReference>
<dbReference type="GO" id="GO:0006508">
    <property type="term" value="P:proteolysis"/>
    <property type="evidence" value="ECO:0007669"/>
    <property type="project" value="UniProtKB-KW"/>
</dbReference>
<dbReference type="CDD" id="cd04269">
    <property type="entry name" value="ZnMc_adamalysin_II_like"/>
    <property type="match status" value="1"/>
</dbReference>
<dbReference type="FunFam" id="3.40.390.10:FF:000002">
    <property type="entry name" value="Disintegrin and metalloproteinase domain-containing protein 22"/>
    <property type="match status" value="1"/>
</dbReference>
<dbReference type="FunFam" id="4.10.70.10:FF:000001">
    <property type="entry name" value="Disintegrin and metalloproteinase domain-containing protein 22"/>
    <property type="match status" value="1"/>
</dbReference>
<dbReference type="Gene3D" id="3.40.390.10">
    <property type="entry name" value="Collagenase (Catalytic Domain)"/>
    <property type="match status" value="1"/>
</dbReference>
<dbReference type="Gene3D" id="4.10.70.10">
    <property type="entry name" value="Disintegrin domain"/>
    <property type="match status" value="1"/>
</dbReference>
<dbReference type="InterPro" id="IPR006586">
    <property type="entry name" value="ADAM_Cys-rich"/>
</dbReference>
<dbReference type="InterPro" id="IPR018358">
    <property type="entry name" value="Disintegrin_CS"/>
</dbReference>
<dbReference type="InterPro" id="IPR001762">
    <property type="entry name" value="Disintegrin_dom"/>
</dbReference>
<dbReference type="InterPro" id="IPR036436">
    <property type="entry name" value="Disintegrin_dom_sf"/>
</dbReference>
<dbReference type="InterPro" id="IPR024079">
    <property type="entry name" value="MetalloPept_cat_dom_sf"/>
</dbReference>
<dbReference type="InterPro" id="IPR001590">
    <property type="entry name" value="Peptidase_M12B"/>
</dbReference>
<dbReference type="InterPro" id="IPR002870">
    <property type="entry name" value="Peptidase_M12B_N"/>
</dbReference>
<dbReference type="InterPro" id="IPR034027">
    <property type="entry name" value="Reprolysin_adamalysin"/>
</dbReference>
<dbReference type="PANTHER" id="PTHR11905">
    <property type="entry name" value="ADAM A DISINTEGRIN AND METALLOPROTEASE DOMAIN"/>
    <property type="match status" value="1"/>
</dbReference>
<dbReference type="PANTHER" id="PTHR11905:SF32">
    <property type="entry name" value="DISINTEGRIN AND METALLOPROTEINASE DOMAIN-CONTAINING PROTEIN 28"/>
    <property type="match status" value="1"/>
</dbReference>
<dbReference type="Pfam" id="PF08516">
    <property type="entry name" value="ADAM_CR"/>
    <property type="match status" value="1"/>
</dbReference>
<dbReference type="Pfam" id="PF00200">
    <property type="entry name" value="Disintegrin"/>
    <property type="match status" value="1"/>
</dbReference>
<dbReference type="Pfam" id="PF01562">
    <property type="entry name" value="Pep_M12B_propep"/>
    <property type="match status" value="1"/>
</dbReference>
<dbReference type="Pfam" id="PF01421">
    <property type="entry name" value="Reprolysin"/>
    <property type="match status" value="1"/>
</dbReference>
<dbReference type="PRINTS" id="PR00289">
    <property type="entry name" value="DISINTEGRIN"/>
</dbReference>
<dbReference type="SMART" id="SM00608">
    <property type="entry name" value="ACR"/>
    <property type="match status" value="1"/>
</dbReference>
<dbReference type="SMART" id="SM00050">
    <property type="entry name" value="DISIN"/>
    <property type="match status" value="1"/>
</dbReference>
<dbReference type="SUPFAM" id="SSF57552">
    <property type="entry name" value="Blood coagulation inhibitor (disintegrin)"/>
    <property type="match status" value="1"/>
</dbReference>
<dbReference type="SUPFAM" id="SSF55486">
    <property type="entry name" value="Metalloproteases ('zincins'), catalytic domain"/>
    <property type="match status" value="1"/>
</dbReference>
<dbReference type="PROSITE" id="PS50215">
    <property type="entry name" value="ADAM_MEPRO"/>
    <property type="match status" value="1"/>
</dbReference>
<dbReference type="PROSITE" id="PS00427">
    <property type="entry name" value="DISINTEGRIN_1"/>
    <property type="match status" value="1"/>
</dbReference>
<dbReference type="PROSITE" id="PS50214">
    <property type="entry name" value="DISINTEGRIN_2"/>
    <property type="match status" value="1"/>
</dbReference>
<dbReference type="PROSITE" id="PS00142">
    <property type="entry name" value="ZINC_PROTEASE"/>
    <property type="match status" value="1"/>
</dbReference>
<gene>
    <name type="primary">Svmp3-Eoc22</name>
    <name type="ORF">EOC00022-SVMP</name>
</gene>
<sequence length="613" mass="69426">MMQVLLVTICLAVFPYQGSSIILESGNVNDYEIVYPQKVTALPIEAILQPEQKYEDAMQYEFEVNGEPVVLHLEKNKNLFTKDYSETHYSPDGREITTKPLIEDHCYYHGRIQNDAHSTASISACNGLKGHFKLQGETYLIEPLKIPDSEAHAVYKYENIEKEDEALKMCGVKHTNWESDEPIKEASQLFATSEQHRFRERYIEFFIVVDQRMYNKHNNDSAAIRTWIFEMLNTVNEIYLPWNIHVPLVGLEFWTQGDLINVVSSADKTLDSFGEWRRRDLLNRKAHDNAHLITAMHFDAQTLGLAYTGSMCHPKYSTGVFQDSSEINIFVAITLAHELGHNLGISHDVPSCTCQTKACIMSPYLSDQPTKLFSNCSEIQYERFLTQRNPKCMINKPLRTDIISPPVCGNGLLEREEECDCGSPENCRDPCCDAASCKLHSWVECESGECCDQCRFKRAGTLCRPARDDCDMAESCSGHSADCPIDGFHANGQPCSHNLGYCYNGKCPLTLYQCRAFLGKDVVGVQESCFQYNRLGNTYAYCRKENGRKIPCAPKDEKCGRLYCSYKSFGDYISCLPCYRANEEDKGMVDEGTKCGEGKVCSNGYCVDLNVAY</sequence>